<protein>
    <recommendedName>
        <fullName evidence="1">Adenosylhomocysteinase</fullName>
        <ecNumber evidence="1">3.13.2.1</ecNumber>
    </recommendedName>
    <alternativeName>
        <fullName evidence="1">S-adenosyl-L-homocysteine hydrolase</fullName>
        <shortName evidence="1">AdoHcyase</shortName>
    </alternativeName>
</protein>
<proteinExistence type="inferred from homology"/>
<feature type="chain" id="PRO_1000024746" description="Adenosylhomocysteinase">
    <location>
        <begin position="1"/>
        <end position="472"/>
    </location>
</feature>
<feature type="binding site" evidence="1">
    <location>
        <position position="64"/>
    </location>
    <ligand>
        <name>substrate</name>
    </ligand>
</feature>
<feature type="binding site" evidence="1">
    <location>
        <position position="138"/>
    </location>
    <ligand>
        <name>substrate</name>
    </ligand>
</feature>
<feature type="binding site" evidence="1">
    <location>
        <position position="198"/>
    </location>
    <ligand>
        <name>substrate</name>
    </ligand>
</feature>
<feature type="binding site" evidence="1">
    <location>
        <begin position="199"/>
        <end position="201"/>
    </location>
    <ligand>
        <name>NAD(+)</name>
        <dbReference type="ChEBI" id="CHEBI:57540"/>
    </ligand>
</feature>
<feature type="binding site" evidence="1">
    <location>
        <position position="228"/>
    </location>
    <ligand>
        <name>substrate</name>
    </ligand>
</feature>
<feature type="binding site" evidence="1">
    <location>
        <position position="232"/>
    </location>
    <ligand>
        <name>substrate</name>
    </ligand>
</feature>
<feature type="binding site" evidence="1">
    <location>
        <position position="233"/>
    </location>
    <ligand>
        <name>NAD(+)</name>
        <dbReference type="ChEBI" id="CHEBI:57540"/>
    </ligand>
</feature>
<feature type="binding site" evidence="1">
    <location>
        <begin position="262"/>
        <end position="267"/>
    </location>
    <ligand>
        <name>NAD(+)</name>
        <dbReference type="ChEBI" id="CHEBI:57540"/>
    </ligand>
</feature>
<feature type="binding site" evidence="1">
    <location>
        <position position="285"/>
    </location>
    <ligand>
        <name>NAD(+)</name>
        <dbReference type="ChEBI" id="CHEBI:57540"/>
    </ligand>
</feature>
<feature type="binding site" evidence="1">
    <location>
        <position position="320"/>
    </location>
    <ligand>
        <name>NAD(+)</name>
        <dbReference type="ChEBI" id="CHEBI:57540"/>
    </ligand>
</feature>
<feature type="binding site" evidence="1">
    <location>
        <begin position="341"/>
        <end position="343"/>
    </location>
    <ligand>
        <name>NAD(+)</name>
        <dbReference type="ChEBI" id="CHEBI:57540"/>
    </ligand>
</feature>
<feature type="binding site" evidence="1">
    <location>
        <position position="386"/>
    </location>
    <ligand>
        <name>NAD(+)</name>
        <dbReference type="ChEBI" id="CHEBI:57540"/>
    </ligand>
</feature>
<dbReference type="EC" id="3.13.2.1" evidence="1"/>
<dbReference type="EMBL" id="CP000111">
    <property type="protein sequence ID" value="ABB50779.1"/>
    <property type="molecule type" value="Genomic_DNA"/>
</dbReference>
<dbReference type="RefSeq" id="WP_011377260.1">
    <property type="nucleotide sequence ID" value="NC_007577.1"/>
</dbReference>
<dbReference type="SMR" id="Q318B6"/>
<dbReference type="STRING" id="74546.PMT9312_1718"/>
<dbReference type="KEGG" id="pmi:PMT9312_1718"/>
<dbReference type="eggNOG" id="COG0499">
    <property type="taxonomic scope" value="Bacteria"/>
</dbReference>
<dbReference type="HOGENOM" id="CLU_025194_2_1_3"/>
<dbReference type="OrthoDB" id="9802717at2"/>
<dbReference type="UniPathway" id="UPA00314">
    <property type="reaction ID" value="UER00076"/>
</dbReference>
<dbReference type="Proteomes" id="UP000002715">
    <property type="component" value="Chromosome"/>
</dbReference>
<dbReference type="GO" id="GO:0005829">
    <property type="term" value="C:cytosol"/>
    <property type="evidence" value="ECO:0007669"/>
    <property type="project" value="TreeGrafter"/>
</dbReference>
<dbReference type="GO" id="GO:0004013">
    <property type="term" value="F:adenosylhomocysteinase activity"/>
    <property type="evidence" value="ECO:0007669"/>
    <property type="project" value="UniProtKB-UniRule"/>
</dbReference>
<dbReference type="GO" id="GO:0071269">
    <property type="term" value="P:L-homocysteine biosynthetic process"/>
    <property type="evidence" value="ECO:0007669"/>
    <property type="project" value="UniProtKB-UniRule"/>
</dbReference>
<dbReference type="GO" id="GO:0006730">
    <property type="term" value="P:one-carbon metabolic process"/>
    <property type="evidence" value="ECO:0007669"/>
    <property type="project" value="UniProtKB-KW"/>
</dbReference>
<dbReference type="GO" id="GO:0033353">
    <property type="term" value="P:S-adenosylmethionine cycle"/>
    <property type="evidence" value="ECO:0007669"/>
    <property type="project" value="TreeGrafter"/>
</dbReference>
<dbReference type="CDD" id="cd00401">
    <property type="entry name" value="SAHH"/>
    <property type="match status" value="1"/>
</dbReference>
<dbReference type="FunFam" id="3.40.50.720:FF:000004">
    <property type="entry name" value="Adenosylhomocysteinase"/>
    <property type="match status" value="1"/>
</dbReference>
<dbReference type="Gene3D" id="3.40.50.1480">
    <property type="entry name" value="Adenosylhomocysteinase-like"/>
    <property type="match status" value="1"/>
</dbReference>
<dbReference type="Gene3D" id="3.40.50.720">
    <property type="entry name" value="NAD(P)-binding Rossmann-like Domain"/>
    <property type="match status" value="1"/>
</dbReference>
<dbReference type="HAMAP" id="MF_00563">
    <property type="entry name" value="AdoHcyase"/>
    <property type="match status" value="1"/>
</dbReference>
<dbReference type="InterPro" id="IPR042172">
    <property type="entry name" value="Adenosylhomocyst_ase-like_sf"/>
</dbReference>
<dbReference type="InterPro" id="IPR000043">
    <property type="entry name" value="Adenosylhomocysteinase-like"/>
</dbReference>
<dbReference type="InterPro" id="IPR015878">
    <property type="entry name" value="Ado_hCys_hydrolase_NAD-bd"/>
</dbReference>
<dbReference type="InterPro" id="IPR036291">
    <property type="entry name" value="NAD(P)-bd_dom_sf"/>
</dbReference>
<dbReference type="InterPro" id="IPR020082">
    <property type="entry name" value="S-Ado-L-homoCys_hydrolase_CS"/>
</dbReference>
<dbReference type="NCBIfam" id="TIGR00936">
    <property type="entry name" value="ahcY"/>
    <property type="match status" value="1"/>
</dbReference>
<dbReference type="NCBIfam" id="NF004005">
    <property type="entry name" value="PRK05476.2-3"/>
    <property type="match status" value="1"/>
</dbReference>
<dbReference type="PANTHER" id="PTHR23420">
    <property type="entry name" value="ADENOSYLHOMOCYSTEINASE"/>
    <property type="match status" value="1"/>
</dbReference>
<dbReference type="PANTHER" id="PTHR23420:SF0">
    <property type="entry name" value="ADENOSYLHOMOCYSTEINASE"/>
    <property type="match status" value="1"/>
</dbReference>
<dbReference type="Pfam" id="PF05221">
    <property type="entry name" value="AdoHcyase"/>
    <property type="match status" value="1"/>
</dbReference>
<dbReference type="Pfam" id="PF00670">
    <property type="entry name" value="AdoHcyase_NAD"/>
    <property type="match status" value="1"/>
</dbReference>
<dbReference type="PIRSF" id="PIRSF001109">
    <property type="entry name" value="Ad_hcy_hydrolase"/>
    <property type="match status" value="1"/>
</dbReference>
<dbReference type="SMART" id="SM00996">
    <property type="entry name" value="AdoHcyase"/>
    <property type="match status" value="1"/>
</dbReference>
<dbReference type="SMART" id="SM00997">
    <property type="entry name" value="AdoHcyase_NAD"/>
    <property type="match status" value="1"/>
</dbReference>
<dbReference type="SUPFAM" id="SSF52283">
    <property type="entry name" value="Formate/glycerate dehydrogenase catalytic domain-like"/>
    <property type="match status" value="1"/>
</dbReference>
<dbReference type="SUPFAM" id="SSF51735">
    <property type="entry name" value="NAD(P)-binding Rossmann-fold domains"/>
    <property type="match status" value="1"/>
</dbReference>
<dbReference type="PROSITE" id="PS00738">
    <property type="entry name" value="ADOHCYASE_1"/>
    <property type="match status" value="1"/>
</dbReference>
<dbReference type="PROSITE" id="PS00739">
    <property type="entry name" value="ADOHCYASE_2"/>
    <property type="match status" value="1"/>
</dbReference>
<reference key="1">
    <citation type="journal article" date="2006" name="Science">
        <title>Genomic islands and the ecology and evolution of Prochlorococcus.</title>
        <authorList>
            <person name="Coleman M.L."/>
            <person name="Sullivan M.B."/>
            <person name="Martiny A.C."/>
            <person name="Steglich C."/>
            <person name="Barry K."/>
            <person name="Delong E.F."/>
            <person name="Chisholm S.W."/>
        </authorList>
    </citation>
    <scope>NUCLEOTIDE SEQUENCE [LARGE SCALE GENOMIC DNA]</scope>
    <source>
        <strain>MIT 9312</strain>
    </source>
</reference>
<comment type="function">
    <text evidence="1">May play a key role in the regulation of the intracellular concentration of adenosylhomocysteine.</text>
</comment>
<comment type="catalytic activity">
    <reaction evidence="1">
        <text>S-adenosyl-L-homocysteine + H2O = L-homocysteine + adenosine</text>
        <dbReference type="Rhea" id="RHEA:21708"/>
        <dbReference type="ChEBI" id="CHEBI:15377"/>
        <dbReference type="ChEBI" id="CHEBI:16335"/>
        <dbReference type="ChEBI" id="CHEBI:57856"/>
        <dbReference type="ChEBI" id="CHEBI:58199"/>
        <dbReference type="EC" id="3.13.2.1"/>
    </reaction>
</comment>
<comment type="cofactor">
    <cofactor evidence="1">
        <name>NAD(+)</name>
        <dbReference type="ChEBI" id="CHEBI:57540"/>
    </cofactor>
    <text evidence="1">Binds 1 NAD(+) per subunit.</text>
</comment>
<comment type="pathway">
    <text evidence="1">Amino-acid biosynthesis; L-homocysteine biosynthesis; L-homocysteine from S-adenosyl-L-homocysteine: step 1/1.</text>
</comment>
<comment type="subcellular location">
    <subcellularLocation>
        <location evidence="1">Cytoplasm</location>
    </subcellularLocation>
</comment>
<comment type="similarity">
    <text evidence="1">Belongs to the adenosylhomocysteinase family.</text>
</comment>
<gene>
    <name evidence="1" type="primary">ahcY</name>
    <name type="ordered locus">PMT9312_1718</name>
</gene>
<sequence length="472" mass="51708">MVIANSVKSSTTNYVVADISLSDFGRKEIKIAETEMPGLMALRDKYQSEKPLKGAKIAGSLHMTIQTAVLIETLVDLGAEVKWASCNIFSTQDHAAAAIADQGISVYAKKGETLDEYWQYTHCILDWGADSPNMILDDGGDATGLLILGSKAEKDLSVLDNPGNEEEIALFNSIKYKLETDSDFYSRIKSNIIGVTEETTTGVARLYQLQKQNALPFPAINVNDSVTKSKFDNLYGCRESLVDSIKRATDVMIAGKVALVMGFGDVGKGSAQSLRGLGAIVKVAEVDPICALQAAMEGFSVVTLDDVVEDIDIFVTATGNYQVITNKNLVKMKDEAIVCNIGHFDNEIDVASLKDYPWENIKPQVDHITLPSGNKIILLAEGRLVNLGCATGHPSFVMSNSFTNQVLAQIELFNKSEKYAKEVYVLPKHLDEMVARLHLDKIGAKLTKLTEEQADYINVSVEGPYKPELYRY</sequence>
<keyword id="KW-0963">Cytoplasm</keyword>
<keyword id="KW-0378">Hydrolase</keyword>
<keyword id="KW-0520">NAD</keyword>
<keyword id="KW-0554">One-carbon metabolism</keyword>
<evidence type="ECO:0000255" key="1">
    <source>
        <dbReference type="HAMAP-Rule" id="MF_00563"/>
    </source>
</evidence>
<accession>Q318B6</accession>
<name>SAHH_PROM9</name>
<organism>
    <name type="scientific">Prochlorococcus marinus (strain MIT 9312)</name>
    <dbReference type="NCBI Taxonomy" id="74546"/>
    <lineage>
        <taxon>Bacteria</taxon>
        <taxon>Bacillati</taxon>
        <taxon>Cyanobacteriota</taxon>
        <taxon>Cyanophyceae</taxon>
        <taxon>Synechococcales</taxon>
        <taxon>Prochlorococcaceae</taxon>
        <taxon>Prochlorococcus</taxon>
    </lineage>
</organism>